<feature type="chain" id="PRO_0000096130" description="Single-stranded DNA-binding protein">
    <location>
        <begin position="1"/>
        <end position="176"/>
    </location>
</feature>
<feature type="domain" description="SSB" evidence="1">
    <location>
        <begin position="4"/>
        <end position="106"/>
    </location>
</feature>
<feature type="region of interest" description="Disordered" evidence="2">
    <location>
        <begin position="118"/>
        <end position="176"/>
    </location>
</feature>
<feature type="compositionally biased region" description="Polar residues" evidence="2">
    <location>
        <begin position="157"/>
        <end position="176"/>
    </location>
</feature>
<evidence type="ECO:0000255" key="1">
    <source>
        <dbReference type="HAMAP-Rule" id="MF_00984"/>
    </source>
</evidence>
<evidence type="ECO:0000256" key="2">
    <source>
        <dbReference type="SAM" id="MobiDB-lite"/>
    </source>
</evidence>
<name>SSB_TREPA</name>
<reference key="1">
    <citation type="journal article" date="1998" name="Science">
        <title>Complete genome sequence of Treponema pallidum, the syphilis spirochete.</title>
        <authorList>
            <person name="Fraser C.M."/>
            <person name="Norris S.J."/>
            <person name="Weinstock G.M."/>
            <person name="White O."/>
            <person name="Sutton G.G."/>
            <person name="Dodson R.J."/>
            <person name="Gwinn M.L."/>
            <person name="Hickey E.K."/>
            <person name="Clayton R.A."/>
            <person name="Ketchum K.A."/>
            <person name="Sodergren E."/>
            <person name="Hardham J.M."/>
            <person name="McLeod M.P."/>
            <person name="Salzberg S.L."/>
            <person name="Peterson J.D."/>
            <person name="Khalak H.G."/>
            <person name="Richardson D.L."/>
            <person name="Howell J.K."/>
            <person name="Chidambaram M."/>
            <person name="Utterback T.R."/>
            <person name="McDonald L.A."/>
            <person name="Artiach P."/>
            <person name="Bowman C."/>
            <person name="Cotton M.D."/>
            <person name="Fujii C."/>
            <person name="Garland S.A."/>
            <person name="Hatch B."/>
            <person name="Horst K."/>
            <person name="Roberts K.M."/>
            <person name="Sandusky M."/>
            <person name="Weidman J.F."/>
            <person name="Smith H.O."/>
            <person name="Venter J.C."/>
        </authorList>
    </citation>
    <scope>NUCLEOTIDE SEQUENCE [LARGE SCALE GENOMIC DNA]</scope>
    <source>
        <strain>Nichols</strain>
    </source>
</reference>
<gene>
    <name type="primary">ssb</name>
    <name type="ordered locus">TP_0062</name>
</gene>
<organism>
    <name type="scientific">Treponema pallidum (strain Nichols)</name>
    <dbReference type="NCBI Taxonomy" id="243276"/>
    <lineage>
        <taxon>Bacteria</taxon>
        <taxon>Pseudomonadati</taxon>
        <taxon>Spirochaetota</taxon>
        <taxon>Spirochaetia</taxon>
        <taxon>Spirochaetales</taxon>
        <taxon>Treponemataceae</taxon>
        <taxon>Treponema</taxon>
    </lineage>
</organism>
<accession>O83101</accession>
<proteinExistence type="inferred from homology"/>
<protein>
    <recommendedName>
        <fullName evidence="1">Single-stranded DNA-binding protein</fullName>
        <shortName evidence="1">SSB</shortName>
    </recommendedName>
</protein>
<dbReference type="EMBL" id="AE000520">
    <property type="protein sequence ID" value="AAC65057.1"/>
    <property type="molecule type" value="Genomic_DNA"/>
</dbReference>
<dbReference type="PIR" id="F71370">
    <property type="entry name" value="F71370"/>
</dbReference>
<dbReference type="RefSeq" id="WP_010881511.1">
    <property type="nucleotide sequence ID" value="NC_021490.2"/>
</dbReference>
<dbReference type="SMR" id="O83101"/>
<dbReference type="IntAct" id="O83101">
    <property type="interactions" value="1"/>
</dbReference>
<dbReference type="STRING" id="243276.TP_0062"/>
<dbReference type="EnsemblBacteria" id="AAC65057">
    <property type="protein sequence ID" value="AAC65057"/>
    <property type="gene ID" value="TP_0062"/>
</dbReference>
<dbReference type="KEGG" id="tpa:TP_0062"/>
<dbReference type="KEGG" id="tpw:TPANIC_0062"/>
<dbReference type="eggNOG" id="COG0629">
    <property type="taxonomic scope" value="Bacteria"/>
</dbReference>
<dbReference type="HOGENOM" id="CLU_078758_0_1_12"/>
<dbReference type="OrthoDB" id="9809878at2"/>
<dbReference type="Proteomes" id="UP000000811">
    <property type="component" value="Chromosome"/>
</dbReference>
<dbReference type="GO" id="GO:0009295">
    <property type="term" value="C:nucleoid"/>
    <property type="evidence" value="ECO:0007669"/>
    <property type="project" value="TreeGrafter"/>
</dbReference>
<dbReference type="GO" id="GO:0003697">
    <property type="term" value="F:single-stranded DNA binding"/>
    <property type="evidence" value="ECO:0007669"/>
    <property type="project" value="UniProtKB-UniRule"/>
</dbReference>
<dbReference type="GO" id="GO:0006260">
    <property type="term" value="P:DNA replication"/>
    <property type="evidence" value="ECO:0007669"/>
    <property type="project" value="InterPro"/>
</dbReference>
<dbReference type="CDD" id="cd04496">
    <property type="entry name" value="SSB_OBF"/>
    <property type="match status" value="1"/>
</dbReference>
<dbReference type="Gene3D" id="2.40.50.140">
    <property type="entry name" value="Nucleic acid-binding proteins"/>
    <property type="match status" value="1"/>
</dbReference>
<dbReference type="HAMAP" id="MF_00984">
    <property type="entry name" value="SSB"/>
    <property type="match status" value="1"/>
</dbReference>
<dbReference type="InterPro" id="IPR012340">
    <property type="entry name" value="NA-bd_OB-fold"/>
</dbReference>
<dbReference type="InterPro" id="IPR000424">
    <property type="entry name" value="Primosome_PriB/ssb"/>
</dbReference>
<dbReference type="InterPro" id="IPR011344">
    <property type="entry name" value="ssDNA-bd"/>
</dbReference>
<dbReference type="NCBIfam" id="TIGR00621">
    <property type="entry name" value="ssb"/>
    <property type="match status" value="1"/>
</dbReference>
<dbReference type="PANTHER" id="PTHR10302">
    <property type="entry name" value="SINGLE-STRANDED DNA-BINDING PROTEIN"/>
    <property type="match status" value="1"/>
</dbReference>
<dbReference type="PANTHER" id="PTHR10302:SF0">
    <property type="entry name" value="SINGLE-STRANDED DNA-BINDING PROTEIN, MITOCHONDRIAL"/>
    <property type="match status" value="1"/>
</dbReference>
<dbReference type="Pfam" id="PF00436">
    <property type="entry name" value="SSB"/>
    <property type="match status" value="1"/>
</dbReference>
<dbReference type="SUPFAM" id="SSF50249">
    <property type="entry name" value="Nucleic acid-binding proteins"/>
    <property type="match status" value="1"/>
</dbReference>
<dbReference type="PROSITE" id="PS50935">
    <property type="entry name" value="SSB"/>
    <property type="match status" value="1"/>
</dbReference>
<keyword id="KW-0238">DNA-binding</keyword>
<keyword id="KW-1185">Reference proteome</keyword>
<sequence length="176" mass="19043">MADVNHVVLVGRLTRDAELKYTSAGGALCRFSVAINRRRKSGDDWVEEVNFFDIVLWGRQGEVISQYLIKGKQVAVEGELRQSRWEQEGQSRSKVEISATNVQLLGSVLGGAARAEDGEFSSSRVAAESTAGRVRGTSSDSRSPTGDILGEKRGLDATSSLDEADFSSSDLDTVPF</sequence>
<comment type="subunit">
    <text evidence="1">Homotetramer.</text>
</comment>